<protein>
    <recommendedName>
        <fullName>Maximins y/Hv type 1</fullName>
    </recommendedName>
    <component>
        <recommendedName>
            <fullName>Maximin-y</fullName>
        </recommendedName>
    </component>
    <component>
        <recommendedName>
            <fullName>Maximin-Hv</fullName>
        </recommendedName>
    </component>
</protein>
<comment type="function">
    <text evidence="1">Maximin-y shows antimicrobial activity against bacteria and against the fungus C.albicans. It has little hemolytic activity (By similarity).</text>
</comment>
<comment type="function">
    <text evidence="1">Maximin-Hv shows antimicrobial activity against bacteria and against the fungus C.albicans. Shows strong hemolytic activity (By similarity).</text>
</comment>
<comment type="subcellular location">
    <subcellularLocation>
        <location>Secreted</location>
    </subcellularLocation>
</comment>
<comment type="tissue specificity">
    <text>Expressed by the skin glands.</text>
</comment>
<comment type="similarity">
    <text evidence="3">Belongs to the bombinin family.</text>
</comment>
<keyword id="KW-0027">Amidation</keyword>
<keyword id="KW-0878">Amphibian defense peptide</keyword>
<keyword id="KW-0044">Antibiotic</keyword>
<keyword id="KW-0929">Antimicrobial</keyword>
<keyword id="KW-0165">Cleavage on pair of basic residues</keyword>
<keyword id="KW-0204">Cytolysis</keyword>
<keyword id="KW-0295">Fungicide</keyword>
<keyword id="KW-0354">Hemolysis</keyword>
<keyword id="KW-0964">Secreted</keyword>
<keyword id="KW-0732">Signal</keyword>
<feature type="signal peptide" evidence="2">
    <location>
        <begin position="1"/>
        <end position="18"/>
    </location>
</feature>
<feature type="propeptide" id="PRO_0000003244" evidence="1">
    <location>
        <begin position="19"/>
        <end position="43"/>
    </location>
</feature>
<feature type="peptide" id="PRO_0000003245" description="Maximin-y">
    <location>
        <begin position="44"/>
        <end position="68"/>
    </location>
</feature>
<feature type="propeptide" id="PRO_0000003246" evidence="3">
    <location>
        <begin position="72"/>
        <end position="121"/>
    </location>
</feature>
<feature type="peptide" id="PRO_0000003247" description="Maximin-Hv">
    <location>
        <begin position="122"/>
        <end position="141"/>
    </location>
</feature>
<feature type="modified residue" description="Phenylalanine amide" evidence="3">
    <location>
        <position position="68"/>
    </location>
</feature>
<feature type="modified residue" description="Isoleucine amide" evidence="3">
    <location>
        <position position="141"/>
    </location>
</feature>
<name>MYHV1_BOMMX</name>
<accession>Q58T91</accession>
<dbReference type="EMBL" id="AY847753">
    <property type="protein sequence ID" value="AAX50247.1"/>
    <property type="molecule type" value="Genomic_DNA"/>
</dbReference>
<dbReference type="SMR" id="Q58T91"/>
<dbReference type="GO" id="GO:0005576">
    <property type="term" value="C:extracellular region"/>
    <property type="evidence" value="ECO:0007669"/>
    <property type="project" value="UniProtKB-SubCell"/>
</dbReference>
<dbReference type="GO" id="GO:0042742">
    <property type="term" value="P:defense response to bacterium"/>
    <property type="evidence" value="ECO:0007669"/>
    <property type="project" value="UniProtKB-KW"/>
</dbReference>
<dbReference type="GO" id="GO:0050832">
    <property type="term" value="P:defense response to fungus"/>
    <property type="evidence" value="ECO:0007669"/>
    <property type="project" value="UniProtKB-KW"/>
</dbReference>
<dbReference type="GO" id="GO:0031640">
    <property type="term" value="P:killing of cells of another organism"/>
    <property type="evidence" value="ECO:0007669"/>
    <property type="project" value="UniProtKB-KW"/>
</dbReference>
<dbReference type="InterPro" id="IPR007962">
    <property type="entry name" value="Bombinin"/>
</dbReference>
<dbReference type="Pfam" id="PF05298">
    <property type="entry name" value="Bombinin"/>
    <property type="match status" value="1"/>
</dbReference>
<proteinExistence type="evidence at transcript level"/>
<reference key="1">
    <citation type="journal article" date="2005" name="Eur. J. Immunol.">
        <title>Variety of antimicrobial peptides in the Bombina maxima toad and evidence of their rapid diversification.</title>
        <authorList>
            <person name="Lee W.-H."/>
            <person name="Li Y."/>
            <person name="Lai R."/>
            <person name="Li S."/>
            <person name="Zhang Y."/>
            <person name="Wang W."/>
        </authorList>
    </citation>
    <scope>NUCLEOTIDE SEQUENCE [GENOMIC DNA]</scope>
    <source>
        <tissue>Skin</tissue>
    </source>
</reference>
<evidence type="ECO:0000250" key="1"/>
<evidence type="ECO:0000255" key="2"/>
<evidence type="ECO:0000305" key="3"/>
<sequence>MNFKYIVAVSFLIASGYARSEENDVQSLSQREVLEEESLREIRGIGGALLSAGKSALKGLAKGFAEHFGKRTAEDHEVMKRLEAVMRDLDSLDHPEEASERETRGFNQEEIANLFTKKEKRILGPVLSLVGSALGGLIKKIG</sequence>
<organism>
    <name type="scientific">Bombina maxima</name>
    <name type="common">Giant fire-bellied toad</name>
    <name type="synonym">Chinese red belly toad</name>
    <dbReference type="NCBI Taxonomy" id="161274"/>
    <lineage>
        <taxon>Eukaryota</taxon>
        <taxon>Metazoa</taxon>
        <taxon>Chordata</taxon>
        <taxon>Craniata</taxon>
        <taxon>Vertebrata</taxon>
        <taxon>Euteleostomi</taxon>
        <taxon>Amphibia</taxon>
        <taxon>Batrachia</taxon>
        <taxon>Anura</taxon>
        <taxon>Bombinatoridae</taxon>
        <taxon>Bombina</taxon>
    </lineage>
</organism>